<evidence type="ECO:0000255" key="1">
    <source>
        <dbReference type="HAMAP-Rule" id="MF_00249"/>
    </source>
</evidence>
<evidence type="ECO:0000256" key="2">
    <source>
        <dbReference type="SAM" id="MobiDB-lite"/>
    </source>
</evidence>
<name>HSLU_BORPA</name>
<feature type="chain" id="PRO_0000160481" description="ATP-dependent protease ATPase subunit HslU">
    <location>
        <begin position="1"/>
        <end position="444"/>
    </location>
</feature>
<feature type="region of interest" description="Disordered" evidence="2">
    <location>
        <begin position="130"/>
        <end position="158"/>
    </location>
</feature>
<feature type="binding site" evidence="1">
    <location>
        <position position="20"/>
    </location>
    <ligand>
        <name>ATP</name>
        <dbReference type="ChEBI" id="CHEBI:30616"/>
    </ligand>
</feature>
<feature type="binding site" evidence="1">
    <location>
        <begin position="62"/>
        <end position="67"/>
    </location>
    <ligand>
        <name>ATP</name>
        <dbReference type="ChEBI" id="CHEBI:30616"/>
    </ligand>
</feature>
<feature type="binding site" evidence="1">
    <location>
        <position position="257"/>
    </location>
    <ligand>
        <name>ATP</name>
        <dbReference type="ChEBI" id="CHEBI:30616"/>
    </ligand>
</feature>
<feature type="binding site" evidence="1">
    <location>
        <position position="322"/>
    </location>
    <ligand>
        <name>ATP</name>
        <dbReference type="ChEBI" id="CHEBI:30616"/>
    </ligand>
</feature>
<feature type="binding site" evidence="1">
    <location>
        <position position="394"/>
    </location>
    <ligand>
        <name>ATP</name>
        <dbReference type="ChEBI" id="CHEBI:30616"/>
    </ligand>
</feature>
<protein>
    <recommendedName>
        <fullName evidence="1">ATP-dependent protease ATPase subunit HslU</fullName>
    </recommendedName>
    <alternativeName>
        <fullName evidence="1">Unfoldase HslU</fullName>
    </alternativeName>
</protein>
<gene>
    <name evidence="1" type="primary">hslU</name>
    <name type="synonym">htpI</name>
    <name type="ordered locus">BPP0176</name>
</gene>
<comment type="function">
    <text evidence="1">ATPase subunit of a proteasome-like degradation complex; this subunit has chaperone activity. The binding of ATP and its subsequent hydrolysis by HslU are essential for unfolding of protein substrates subsequently hydrolyzed by HslV. HslU recognizes the N-terminal part of its protein substrates and unfolds these before they are guided to HslV for hydrolysis.</text>
</comment>
<comment type="subunit">
    <text evidence="1">A double ring-shaped homohexamer of HslV is capped on each side by a ring-shaped HslU homohexamer. The assembly of the HslU/HslV complex is dependent on binding of ATP.</text>
</comment>
<comment type="subcellular location">
    <subcellularLocation>
        <location evidence="1">Cytoplasm</location>
    </subcellularLocation>
</comment>
<comment type="similarity">
    <text evidence="1">Belongs to the ClpX chaperone family. HslU subfamily.</text>
</comment>
<proteinExistence type="inferred from homology"/>
<reference key="1">
    <citation type="journal article" date="2003" name="Nat. Genet.">
        <title>Comparative analysis of the genome sequences of Bordetella pertussis, Bordetella parapertussis and Bordetella bronchiseptica.</title>
        <authorList>
            <person name="Parkhill J."/>
            <person name="Sebaihia M."/>
            <person name="Preston A."/>
            <person name="Murphy L.D."/>
            <person name="Thomson N.R."/>
            <person name="Harris D.E."/>
            <person name="Holden M.T.G."/>
            <person name="Churcher C.M."/>
            <person name="Bentley S.D."/>
            <person name="Mungall K.L."/>
            <person name="Cerdeno-Tarraga A.-M."/>
            <person name="Temple L."/>
            <person name="James K.D."/>
            <person name="Harris B."/>
            <person name="Quail M.A."/>
            <person name="Achtman M."/>
            <person name="Atkin R."/>
            <person name="Baker S."/>
            <person name="Basham D."/>
            <person name="Bason N."/>
            <person name="Cherevach I."/>
            <person name="Chillingworth T."/>
            <person name="Collins M."/>
            <person name="Cronin A."/>
            <person name="Davis P."/>
            <person name="Doggett J."/>
            <person name="Feltwell T."/>
            <person name="Goble A."/>
            <person name="Hamlin N."/>
            <person name="Hauser H."/>
            <person name="Holroyd S."/>
            <person name="Jagels K."/>
            <person name="Leather S."/>
            <person name="Moule S."/>
            <person name="Norberczak H."/>
            <person name="O'Neil S."/>
            <person name="Ormond D."/>
            <person name="Price C."/>
            <person name="Rabbinowitsch E."/>
            <person name="Rutter S."/>
            <person name="Sanders M."/>
            <person name="Saunders D."/>
            <person name="Seeger K."/>
            <person name="Sharp S."/>
            <person name="Simmonds M."/>
            <person name="Skelton J."/>
            <person name="Squares R."/>
            <person name="Squares S."/>
            <person name="Stevens K."/>
            <person name="Unwin L."/>
            <person name="Whitehead S."/>
            <person name="Barrell B.G."/>
            <person name="Maskell D.J."/>
        </authorList>
    </citation>
    <scope>NUCLEOTIDE SEQUENCE [LARGE SCALE GENOMIC DNA]</scope>
    <source>
        <strain>12822 / ATCC BAA-587 / NCTC 13253</strain>
    </source>
</reference>
<keyword id="KW-0067">ATP-binding</keyword>
<keyword id="KW-0143">Chaperone</keyword>
<keyword id="KW-0963">Cytoplasm</keyword>
<keyword id="KW-0547">Nucleotide-binding</keyword>
<organism>
    <name type="scientific">Bordetella parapertussis (strain 12822 / ATCC BAA-587 / NCTC 13253)</name>
    <dbReference type="NCBI Taxonomy" id="257311"/>
    <lineage>
        <taxon>Bacteria</taxon>
        <taxon>Pseudomonadati</taxon>
        <taxon>Pseudomonadota</taxon>
        <taxon>Betaproteobacteria</taxon>
        <taxon>Burkholderiales</taxon>
        <taxon>Alcaligenaceae</taxon>
        <taxon>Bordetella</taxon>
    </lineage>
</organism>
<accession>Q7W216</accession>
<dbReference type="EMBL" id="BX640423">
    <property type="protein sequence ID" value="CAE39917.1"/>
    <property type="molecule type" value="Genomic_DNA"/>
</dbReference>
<dbReference type="RefSeq" id="WP_010927332.1">
    <property type="nucleotide sequence ID" value="NC_002928.3"/>
</dbReference>
<dbReference type="SMR" id="Q7W216"/>
<dbReference type="KEGG" id="bpa:BPP0176"/>
<dbReference type="HOGENOM" id="CLU_033123_0_0_4"/>
<dbReference type="Proteomes" id="UP000001421">
    <property type="component" value="Chromosome"/>
</dbReference>
<dbReference type="GO" id="GO:0009376">
    <property type="term" value="C:HslUV protease complex"/>
    <property type="evidence" value="ECO:0007669"/>
    <property type="project" value="UniProtKB-UniRule"/>
</dbReference>
<dbReference type="GO" id="GO:0005524">
    <property type="term" value="F:ATP binding"/>
    <property type="evidence" value="ECO:0007669"/>
    <property type="project" value="UniProtKB-UniRule"/>
</dbReference>
<dbReference type="GO" id="GO:0016887">
    <property type="term" value="F:ATP hydrolysis activity"/>
    <property type="evidence" value="ECO:0007669"/>
    <property type="project" value="InterPro"/>
</dbReference>
<dbReference type="GO" id="GO:0008233">
    <property type="term" value="F:peptidase activity"/>
    <property type="evidence" value="ECO:0007669"/>
    <property type="project" value="InterPro"/>
</dbReference>
<dbReference type="GO" id="GO:0036402">
    <property type="term" value="F:proteasome-activating activity"/>
    <property type="evidence" value="ECO:0007669"/>
    <property type="project" value="UniProtKB-UniRule"/>
</dbReference>
<dbReference type="GO" id="GO:0043335">
    <property type="term" value="P:protein unfolding"/>
    <property type="evidence" value="ECO:0007669"/>
    <property type="project" value="UniProtKB-UniRule"/>
</dbReference>
<dbReference type="GO" id="GO:0051603">
    <property type="term" value="P:proteolysis involved in protein catabolic process"/>
    <property type="evidence" value="ECO:0007669"/>
    <property type="project" value="TreeGrafter"/>
</dbReference>
<dbReference type="CDD" id="cd19498">
    <property type="entry name" value="RecA-like_HslU"/>
    <property type="match status" value="1"/>
</dbReference>
<dbReference type="FunFam" id="3.40.50.300:FF:000213">
    <property type="entry name" value="ATP-dependent protease ATPase subunit HslU"/>
    <property type="match status" value="1"/>
</dbReference>
<dbReference type="FunFam" id="3.40.50.300:FF:000220">
    <property type="entry name" value="ATP-dependent protease ATPase subunit HslU"/>
    <property type="match status" value="1"/>
</dbReference>
<dbReference type="Gene3D" id="1.10.8.60">
    <property type="match status" value="1"/>
</dbReference>
<dbReference type="Gene3D" id="1.10.8.10">
    <property type="entry name" value="DNA helicase RuvA subunit, C-terminal domain"/>
    <property type="match status" value="1"/>
</dbReference>
<dbReference type="Gene3D" id="3.40.50.300">
    <property type="entry name" value="P-loop containing nucleotide triphosphate hydrolases"/>
    <property type="match status" value="2"/>
</dbReference>
<dbReference type="HAMAP" id="MF_00249">
    <property type="entry name" value="HslU"/>
    <property type="match status" value="1"/>
</dbReference>
<dbReference type="InterPro" id="IPR003593">
    <property type="entry name" value="AAA+_ATPase"/>
</dbReference>
<dbReference type="InterPro" id="IPR050052">
    <property type="entry name" value="ATP-dep_Clp_protease_ClpX"/>
</dbReference>
<dbReference type="InterPro" id="IPR003959">
    <property type="entry name" value="ATPase_AAA_core"/>
</dbReference>
<dbReference type="InterPro" id="IPR019489">
    <property type="entry name" value="Clp_ATPase_C"/>
</dbReference>
<dbReference type="InterPro" id="IPR004491">
    <property type="entry name" value="HslU"/>
</dbReference>
<dbReference type="InterPro" id="IPR027417">
    <property type="entry name" value="P-loop_NTPase"/>
</dbReference>
<dbReference type="NCBIfam" id="TIGR00390">
    <property type="entry name" value="hslU"/>
    <property type="match status" value="1"/>
</dbReference>
<dbReference type="NCBIfam" id="NF003544">
    <property type="entry name" value="PRK05201.1"/>
    <property type="match status" value="1"/>
</dbReference>
<dbReference type="PANTHER" id="PTHR48102">
    <property type="entry name" value="ATP-DEPENDENT CLP PROTEASE ATP-BINDING SUBUNIT CLPX-LIKE, MITOCHONDRIAL-RELATED"/>
    <property type="match status" value="1"/>
</dbReference>
<dbReference type="PANTHER" id="PTHR48102:SF3">
    <property type="entry name" value="ATP-DEPENDENT PROTEASE ATPASE SUBUNIT HSLU"/>
    <property type="match status" value="1"/>
</dbReference>
<dbReference type="Pfam" id="PF00004">
    <property type="entry name" value="AAA"/>
    <property type="match status" value="1"/>
</dbReference>
<dbReference type="Pfam" id="PF07724">
    <property type="entry name" value="AAA_2"/>
    <property type="match status" value="1"/>
</dbReference>
<dbReference type="SMART" id="SM00382">
    <property type="entry name" value="AAA"/>
    <property type="match status" value="1"/>
</dbReference>
<dbReference type="SMART" id="SM01086">
    <property type="entry name" value="ClpB_D2-small"/>
    <property type="match status" value="1"/>
</dbReference>
<dbReference type="SUPFAM" id="SSF52540">
    <property type="entry name" value="P-loop containing nucleoside triphosphate hydrolases"/>
    <property type="match status" value="1"/>
</dbReference>
<sequence>MSANHMTPDEIVAELDKFIIGQNRAKRAVAVALRNRWRRQQVAEPLRHEIHPKNILMIGPTGVGKTEIARRLAKLANAPFIKIEATKFTEVGYVGRDVDTIIRDLTEYSIKQTRELEMRRVRSHAEDAAEDRILDALVPPPRGASGEPERGEDNSARQTFRKRLREGKIDDLEIEIEIAQPMPQMDVMTPPGMEEMAEQLRGMFAGLARDKKKSKKIKVREAFKLIVEEEAAKRVNEDDLRAAAITNVEQNGIVFLDEIDKIAARQETGGADVSRQGVQRDLLPLVEGTTVNTRYGMVRTDHILFIASGAFHLARPSDLIPELQGRFPIRVELDSLSAEDFVSILSETDASLIKQYTALLGTEDVKLEFTDDGIRRLAELAFSVNERTENIGARRLYTVMEKLLEELSFDASANSGEVITIDAAYVDLQLAETAGSQDLARYVL</sequence>